<comment type="function">
    <text evidence="1">Lyase that catalyzes the C1-decarboxylation of 4-hydroxy-3-methoxy-5-(all-trans-polyprenyl)benzoic acid into 2-methoxy-6-(all-trans-polyprenyl)phenol during ubiquinone biosynthesis.</text>
</comment>
<comment type="catalytic activity">
    <reaction evidence="1">
        <text>a 4-hydroxy-3-methoxy-5-(all-trans-polyprenyl)benzoate + H(+) = a 2-methoxy-6-(all-trans-polyprenyl)phenol + CO2</text>
        <dbReference type="Rhea" id="RHEA:81179"/>
        <dbReference type="Rhea" id="RHEA-COMP:9551"/>
        <dbReference type="Rhea" id="RHEA-COMP:10931"/>
        <dbReference type="ChEBI" id="CHEBI:15378"/>
        <dbReference type="ChEBI" id="CHEBI:16526"/>
        <dbReference type="ChEBI" id="CHEBI:62731"/>
        <dbReference type="ChEBI" id="CHEBI:84443"/>
        <dbReference type="EC" id="4.1.1.130"/>
    </reaction>
</comment>
<comment type="cofactor">
    <cofactor evidence="1">
        <name>Zn(2+)</name>
        <dbReference type="ChEBI" id="CHEBI:29105"/>
    </cofactor>
</comment>
<comment type="pathway">
    <text evidence="1">Cofactor biosynthesis; ubiquinone biosynthesis.</text>
</comment>
<comment type="subunit">
    <text evidence="1">Component of a multi-subunit COQ enzyme complex.</text>
</comment>
<comment type="subcellular location">
    <subcellularLocation>
        <location evidence="1">Mitochondrion inner membrane</location>
        <topology evidence="1">Peripheral membrane protein</topology>
        <orientation evidence="1">Matrix side</orientation>
    </subcellularLocation>
</comment>
<comment type="similarity">
    <text evidence="1">Belongs to the COQ4 family.</text>
</comment>
<feature type="transit peptide" description="Mitochondrion" evidence="1">
    <location>
        <begin position="1"/>
        <end position="30"/>
    </location>
</feature>
<feature type="chain" id="PRO_0000388069" description="Ubiquinone biosynthesis protein COQ4 homolog, mitochondrial">
    <location>
        <begin position="31"/>
        <end position="265"/>
    </location>
</feature>
<feature type="binding site" evidence="1">
    <location>
        <position position="170"/>
    </location>
    <ligand>
        <name>Zn(2+)</name>
        <dbReference type="ChEBI" id="CHEBI:29105"/>
    </ligand>
</feature>
<feature type="binding site" evidence="1">
    <location>
        <position position="171"/>
    </location>
    <ligand>
        <name>Zn(2+)</name>
        <dbReference type="ChEBI" id="CHEBI:29105"/>
    </ligand>
</feature>
<feature type="binding site" evidence="1">
    <location>
        <position position="174"/>
    </location>
    <ligand>
        <name>Zn(2+)</name>
        <dbReference type="ChEBI" id="CHEBI:29105"/>
    </ligand>
</feature>
<feature type="binding site" evidence="1">
    <location>
        <position position="186"/>
    </location>
    <ligand>
        <name>Zn(2+)</name>
        <dbReference type="ChEBI" id="CHEBI:29105"/>
    </ligand>
</feature>
<keyword id="KW-0456">Lyase</keyword>
<keyword id="KW-0472">Membrane</keyword>
<keyword id="KW-0479">Metal-binding</keyword>
<keyword id="KW-0496">Mitochondrion</keyword>
<keyword id="KW-0999">Mitochondrion inner membrane</keyword>
<keyword id="KW-1185">Reference proteome</keyword>
<keyword id="KW-0809">Transit peptide</keyword>
<keyword id="KW-0831">Ubiquinone biosynthesis</keyword>
<keyword id="KW-0862">Zinc</keyword>
<gene>
    <name type="ORF">GJ13024</name>
</gene>
<evidence type="ECO:0000255" key="1">
    <source>
        <dbReference type="HAMAP-Rule" id="MF_03111"/>
    </source>
</evidence>
<protein>
    <recommendedName>
        <fullName evidence="1">Ubiquinone biosynthesis protein COQ4 homolog, mitochondrial</fullName>
    </recommendedName>
    <alternativeName>
        <fullName>4-hydroxy-3-methoxy-5-polyprenylbenzoate decarboxylase</fullName>
        <ecNumber evidence="1">4.1.1.130</ecNumber>
    </alternativeName>
    <alternativeName>
        <fullName evidence="1">Coenzyme Q biosynthesis protein 4 homolog</fullName>
    </alternativeName>
</protein>
<sequence length="265" mass="30696">MMQRSWQSWRRGLTLGLASRRSYVASVEAPSTPPEELDAFERDYLKQRIEITPFQKLLLGAGSSIASLLDPHRHDMIACLGETTGESALWNILDSMQATEEGRRILKDKPRINTKTIDFKRLEALPPNTFGATYAKFLKDNKVTPDSRMEVRFLEDPKLAYIMTRYRECHDLVHAALDMPTNMLCEVAVKWVEALNTGLPMCYGAAVFGAVRLRPRQRREYLKRYLPWAIENGKGMRPLMPIYWEQRWEQNIHELRCELGIKPLQ</sequence>
<reference key="1">
    <citation type="journal article" date="2007" name="Nature">
        <title>Evolution of genes and genomes on the Drosophila phylogeny.</title>
        <authorList>
            <consortium name="Drosophila 12 genomes consortium"/>
        </authorList>
    </citation>
    <scope>NUCLEOTIDE SEQUENCE [LARGE SCALE GENOMIC DNA]</scope>
    <source>
        <strain>Tucson 15010-1051.87</strain>
    </source>
</reference>
<organism>
    <name type="scientific">Drosophila virilis</name>
    <name type="common">Fruit fly</name>
    <dbReference type="NCBI Taxonomy" id="7244"/>
    <lineage>
        <taxon>Eukaryota</taxon>
        <taxon>Metazoa</taxon>
        <taxon>Ecdysozoa</taxon>
        <taxon>Arthropoda</taxon>
        <taxon>Hexapoda</taxon>
        <taxon>Insecta</taxon>
        <taxon>Pterygota</taxon>
        <taxon>Neoptera</taxon>
        <taxon>Endopterygota</taxon>
        <taxon>Diptera</taxon>
        <taxon>Brachycera</taxon>
        <taxon>Muscomorpha</taxon>
        <taxon>Ephydroidea</taxon>
        <taxon>Drosophilidae</taxon>
        <taxon>Drosophila</taxon>
    </lineage>
</organism>
<proteinExistence type="inferred from homology"/>
<name>COQ4_DROVI</name>
<accession>B4LE89</accession>
<dbReference type="EC" id="4.1.1.130" evidence="1"/>
<dbReference type="EMBL" id="CH940647">
    <property type="protein sequence ID" value="EDW69045.1"/>
    <property type="molecule type" value="Genomic_DNA"/>
</dbReference>
<dbReference type="SMR" id="B4LE89"/>
<dbReference type="FunCoup" id="B4LE89">
    <property type="interactions" value="718"/>
</dbReference>
<dbReference type="STRING" id="7244.B4LE89"/>
<dbReference type="EnsemblMetazoa" id="FBtr0228949">
    <property type="protein sequence ID" value="FBpp0227441"/>
    <property type="gene ID" value="FBgn0200258"/>
</dbReference>
<dbReference type="EnsemblMetazoa" id="XM_002046667.3">
    <property type="protein sequence ID" value="XP_002046703.1"/>
    <property type="gene ID" value="LOC6622537"/>
</dbReference>
<dbReference type="GeneID" id="6622537"/>
<dbReference type="KEGG" id="dvi:6622537"/>
<dbReference type="CTD" id="51117"/>
<dbReference type="eggNOG" id="KOG3244">
    <property type="taxonomic scope" value="Eukaryota"/>
</dbReference>
<dbReference type="HOGENOM" id="CLU_061241_1_1_1"/>
<dbReference type="InParanoid" id="B4LE89"/>
<dbReference type="OMA" id="YYERHFH"/>
<dbReference type="OrthoDB" id="4249at2759"/>
<dbReference type="PhylomeDB" id="B4LE89"/>
<dbReference type="UniPathway" id="UPA00232"/>
<dbReference type="Proteomes" id="UP000008792">
    <property type="component" value="Unassembled WGS sequence"/>
</dbReference>
<dbReference type="GO" id="GO:0031314">
    <property type="term" value="C:extrinsic component of mitochondrial inner membrane"/>
    <property type="evidence" value="ECO:0007669"/>
    <property type="project" value="UniProtKB-UniRule"/>
</dbReference>
<dbReference type="GO" id="GO:0006744">
    <property type="term" value="P:ubiquinone biosynthetic process"/>
    <property type="evidence" value="ECO:0007669"/>
    <property type="project" value="UniProtKB-UniRule"/>
</dbReference>
<dbReference type="HAMAP" id="MF_03111">
    <property type="entry name" value="Coq4"/>
    <property type="match status" value="1"/>
</dbReference>
<dbReference type="InterPro" id="IPR007715">
    <property type="entry name" value="Coq4"/>
</dbReference>
<dbReference type="InterPro" id="IPR027540">
    <property type="entry name" value="Coq4_euk"/>
</dbReference>
<dbReference type="PANTHER" id="PTHR12922">
    <property type="entry name" value="UBIQUINONE BIOSYNTHESIS PROTEIN"/>
    <property type="match status" value="1"/>
</dbReference>
<dbReference type="PANTHER" id="PTHR12922:SF7">
    <property type="entry name" value="UBIQUINONE BIOSYNTHESIS PROTEIN COQ4 HOMOLOG, MITOCHONDRIAL"/>
    <property type="match status" value="1"/>
</dbReference>
<dbReference type="Pfam" id="PF05019">
    <property type="entry name" value="Coq4"/>
    <property type="match status" value="1"/>
</dbReference>